<gene>
    <name evidence="1" type="primary">pxpA</name>
    <name type="ordered locus">CGSHiGG_02380</name>
</gene>
<feature type="chain" id="PRO_1000045207" description="5-oxoprolinase subunit A">
    <location>
        <begin position="1"/>
        <end position="245"/>
    </location>
</feature>
<comment type="function">
    <text evidence="1">Catalyzes the cleavage of 5-oxoproline to form L-glutamate coupled to the hydrolysis of ATP to ADP and inorganic phosphate.</text>
</comment>
<comment type="catalytic activity">
    <reaction evidence="1">
        <text>5-oxo-L-proline + ATP + 2 H2O = L-glutamate + ADP + phosphate + H(+)</text>
        <dbReference type="Rhea" id="RHEA:10348"/>
        <dbReference type="ChEBI" id="CHEBI:15377"/>
        <dbReference type="ChEBI" id="CHEBI:15378"/>
        <dbReference type="ChEBI" id="CHEBI:29985"/>
        <dbReference type="ChEBI" id="CHEBI:30616"/>
        <dbReference type="ChEBI" id="CHEBI:43474"/>
        <dbReference type="ChEBI" id="CHEBI:58402"/>
        <dbReference type="ChEBI" id="CHEBI:456216"/>
        <dbReference type="EC" id="3.5.2.9"/>
    </reaction>
</comment>
<comment type="subunit">
    <text evidence="1">Forms a complex composed of PxpA, PxpB and PxpC.</text>
</comment>
<comment type="similarity">
    <text evidence="1">Belongs to the LamB/PxpA family.</text>
</comment>
<name>PXPA_HAEIG</name>
<accession>A5UFG0</accession>
<proteinExistence type="inferred from homology"/>
<organism>
    <name type="scientific">Haemophilus influenzae (strain PittGG)</name>
    <dbReference type="NCBI Taxonomy" id="374931"/>
    <lineage>
        <taxon>Bacteria</taxon>
        <taxon>Pseudomonadati</taxon>
        <taxon>Pseudomonadota</taxon>
        <taxon>Gammaproteobacteria</taxon>
        <taxon>Pasteurellales</taxon>
        <taxon>Pasteurellaceae</taxon>
        <taxon>Haemophilus</taxon>
    </lineage>
</organism>
<evidence type="ECO:0000255" key="1">
    <source>
        <dbReference type="HAMAP-Rule" id="MF_00691"/>
    </source>
</evidence>
<reference key="1">
    <citation type="journal article" date="2007" name="Genome Biol.">
        <title>Characterization and modeling of the Haemophilus influenzae core and supragenomes based on the complete genomic sequences of Rd and 12 clinical nontypeable strains.</title>
        <authorList>
            <person name="Hogg J.S."/>
            <person name="Hu F.Z."/>
            <person name="Janto B."/>
            <person name="Boissy R."/>
            <person name="Hayes J."/>
            <person name="Keefe R."/>
            <person name="Post J.C."/>
            <person name="Ehrlich G.D."/>
        </authorList>
    </citation>
    <scope>NUCLEOTIDE SEQUENCE [LARGE SCALE GENOMIC DNA]</scope>
    <source>
        <strain>PittGG</strain>
    </source>
</reference>
<protein>
    <recommendedName>
        <fullName evidence="1">5-oxoprolinase subunit A</fullName>
        <shortName evidence="1">5-OPase subunit A</shortName>
        <ecNumber evidence="1">3.5.2.9</ecNumber>
    </recommendedName>
    <alternativeName>
        <fullName evidence="1">5-oxoprolinase (ATP-hydrolyzing) subunit A</fullName>
    </alternativeName>
</protein>
<dbReference type="EC" id="3.5.2.9" evidence="1"/>
<dbReference type="EMBL" id="CP000672">
    <property type="protein sequence ID" value="ABQ99515.1"/>
    <property type="molecule type" value="Genomic_DNA"/>
</dbReference>
<dbReference type="SMR" id="A5UFG0"/>
<dbReference type="KEGG" id="hiq:CGSHiGG_02380"/>
<dbReference type="HOGENOM" id="CLU_069535_0_0_6"/>
<dbReference type="Proteomes" id="UP000001990">
    <property type="component" value="Chromosome"/>
</dbReference>
<dbReference type="GO" id="GO:0017168">
    <property type="term" value="F:5-oxoprolinase (ATP-hydrolyzing) activity"/>
    <property type="evidence" value="ECO:0007669"/>
    <property type="project" value="UniProtKB-UniRule"/>
</dbReference>
<dbReference type="GO" id="GO:0005524">
    <property type="term" value="F:ATP binding"/>
    <property type="evidence" value="ECO:0007669"/>
    <property type="project" value="UniProtKB-UniRule"/>
</dbReference>
<dbReference type="GO" id="GO:0005975">
    <property type="term" value="P:carbohydrate metabolic process"/>
    <property type="evidence" value="ECO:0007669"/>
    <property type="project" value="InterPro"/>
</dbReference>
<dbReference type="CDD" id="cd10800">
    <property type="entry name" value="LamB_YcsF_YbgL_like"/>
    <property type="match status" value="1"/>
</dbReference>
<dbReference type="Gene3D" id="3.20.20.370">
    <property type="entry name" value="Glycoside hydrolase/deacetylase"/>
    <property type="match status" value="1"/>
</dbReference>
<dbReference type="HAMAP" id="MF_00691">
    <property type="entry name" value="PxpA"/>
    <property type="match status" value="1"/>
</dbReference>
<dbReference type="InterPro" id="IPR011330">
    <property type="entry name" value="Glyco_hydro/deAcase_b/a-brl"/>
</dbReference>
<dbReference type="InterPro" id="IPR005501">
    <property type="entry name" value="LamB/YcsF/PxpA-like"/>
</dbReference>
<dbReference type="NCBIfam" id="NF003814">
    <property type="entry name" value="PRK05406.1-3"/>
    <property type="match status" value="1"/>
</dbReference>
<dbReference type="NCBIfam" id="NF003815">
    <property type="entry name" value="PRK05406.1-4"/>
    <property type="match status" value="1"/>
</dbReference>
<dbReference type="NCBIfam" id="NF003816">
    <property type="entry name" value="PRK05406.1-5"/>
    <property type="match status" value="1"/>
</dbReference>
<dbReference type="PANTHER" id="PTHR30292:SF0">
    <property type="entry name" value="5-OXOPROLINASE SUBUNIT A"/>
    <property type="match status" value="1"/>
</dbReference>
<dbReference type="PANTHER" id="PTHR30292">
    <property type="entry name" value="UNCHARACTERIZED PROTEIN YBGL-RELATED"/>
    <property type="match status" value="1"/>
</dbReference>
<dbReference type="Pfam" id="PF03746">
    <property type="entry name" value="LamB_YcsF"/>
    <property type="match status" value="1"/>
</dbReference>
<dbReference type="SUPFAM" id="SSF88713">
    <property type="entry name" value="Glycoside hydrolase/deacetylase"/>
    <property type="match status" value="1"/>
</dbReference>
<keyword id="KW-0067">ATP-binding</keyword>
<keyword id="KW-0378">Hydrolase</keyword>
<keyword id="KW-0547">Nucleotide-binding</keyword>
<sequence length="245" mass="26792">MKKIDLNADIAEGFPFDESLLQLLSSANIACGLHAGGAKEMQSAVKFAKENKVRIGAHPSFPDRENFGRTAMALSSQELIAHLRYQLGALKAICDGEGAVISYVKPHGALYNQAAKDEKIARVIAQTVYQFDPHLKLMGLAGSLMLCIAEEEKLQTISEVFADRHYMPDGSLVPRSQPNAMVESDKEAIQQVLQMVTKGQVNAIDGSLVPVKAESICLHGDNQHSLQFAKRIVEELEKNHIKITA</sequence>